<sequence>MNKQFHSCSPDPDDGEKLDIDYLSDEGPSTLIFEPSELIDFRVAWDWQKQRQKLLFEKPGSSQAVWLLEHSECYTLGRGATEDNLLFNLSNSPWDVYRIDRGGEVTHHMPGQLVVYLVLDLRRYKTDLNWYLRQLELVLLDTLKDLGIVGKRIDGITGVWINDFKVASIGVGCRRWITQHGLSINVDCDLRGFERIIPCGLTGSKVGKLSSLIPDLKTVDVKPFIKKSLTERFGL</sequence>
<comment type="function">
    <text evidence="1">Catalyzes the transfer of endogenously produced octanoic acid from octanoyl-acyl-carrier-protein onto the lipoyl domains of lipoate-dependent enzymes. Lipoyl-ACP can also act as a substrate although octanoyl-ACP is likely to be the physiological substrate.</text>
</comment>
<comment type="catalytic activity">
    <reaction evidence="1">
        <text>octanoyl-[ACP] + L-lysyl-[protein] = N(6)-octanoyl-L-lysyl-[protein] + holo-[ACP] + H(+)</text>
        <dbReference type="Rhea" id="RHEA:17665"/>
        <dbReference type="Rhea" id="RHEA-COMP:9636"/>
        <dbReference type="Rhea" id="RHEA-COMP:9685"/>
        <dbReference type="Rhea" id="RHEA-COMP:9752"/>
        <dbReference type="Rhea" id="RHEA-COMP:9928"/>
        <dbReference type="ChEBI" id="CHEBI:15378"/>
        <dbReference type="ChEBI" id="CHEBI:29969"/>
        <dbReference type="ChEBI" id="CHEBI:64479"/>
        <dbReference type="ChEBI" id="CHEBI:78463"/>
        <dbReference type="ChEBI" id="CHEBI:78809"/>
        <dbReference type="EC" id="2.3.1.181"/>
    </reaction>
</comment>
<comment type="pathway">
    <text evidence="1">Protein modification; protein lipoylation via endogenous pathway; protein N(6)-(lipoyl)lysine from octanoyl-[acyl-carrier-protein]: step 1/2.</text>
</comment>
<comment type="subcellular location">
    <subcellularLocation>
        <location evidence="1">Cytoplasm</location>
    </subcellularLocation>
</comment>
<comment type="miscellaneous">
    <text evidence="1">In the reaction, the free carboxyl group of octanoic acid is attached via an amide linkage to the epsilon-amino group of a specific lysine residue of lipoyl domains of lipoate-dependent enzymes.</text>
</comment>
<comment type="similarity">
    <text evidence="1">Belongs to the LipB family.</text>
</comment>
<dbReference type="EC" id="2.3.1.181" evidence="1"/>
<dbReference type="EMBL" id="CP000878">
    <property type="protein sequence ID" value="ABX08330.1"/>
    <property type="molecule type" value="Genomic_DNA"/>
</dbReference>
<dbReference type="RefSeq" id="WP_012194953.1">
    <property type="nucleotide sequence ID" value="NC_009976.1"/>
</dbReference>
<dbReference type="SMR" id="A9BE20"/>
<dbReference type="STRING" id="93059.P9211_03991"/>
<dbReference type="KEGG" id="pmj:P9211_03991"/>
<dbReference type="eggNOG" id="COG0321">
    <property type="taxonomic scope" value="Bacteria"/>
</dbReference>
<dbReference type="HOGENOM" id="CLU_035168_1_3_3"/>
<dbReference type="OrthoDB" id="9787061at2"/>
<dbReference type="UniPathway" id="UPA00538">
    <property type="reaction ID" value="UER00592"/>
</dbReference>
<dbReference type="Proteomes" id="UP000000788">
    <property type="component" value="Chromosome"/>
</dbReference>
<dbReference type="GO" id="GO:0005737">
    <property type="term" value="C:cytoplasm"/>
    <property type="evidence" value="ECO:0007669"/>
    <property type="project" value="UniProtKB-SubCell"/>
</dbReference>
<dbReference type="GO" id="GO:0033819">
    <property type="term" value="F:lipoyl(octanoyl) transferase activity"/>
    <property type="evidence" value="ECO:0007669"/>
    <property type="project" value="UniProtKB-EC"/>
</dbReference>
<dbReference type="GO" id="GO:0036211">
    <property type="term" value="P:protein modification process"/>
    <property type="evidence" value="ECO:0007669"/>
    <property type="project" value="InterPro"/>
</dbReference>
<dbReference type="CDD" id="cd16444">
    <property type="entry name" value="LipB"/>
    <property type="match status" value="1"/>
</dbReference>
<dbReference type="Gene3D" id="3.30.930.10">
    <property type="entry name" value="Bira Bifunctional Protein, Domain 2"/>
    <property type="match status" value="1"/>
</dbReference>
<dbReference type="HAMAP" id="MF_00013">
    <property type="entry name" value="LipB"/>
    <property type="match status" value="1"/>
</dbReference>
<dbReference type="InterPro" id="IPR045864">
    <property type="entry name" value="aa-tRNA-synth_II/BPL/LPL"/>
</dbReference>
<dbReference type="InterPro" id="IPR004143">
    <property type="entry name" value="BPL_LPL_catalytic"/>
</dbReference>
<dbReference type="InterPro" id="IPR000544">
    <property type="entry name" value="Octanoyltransferase"/>
</dbReference>
<dbReference type="InterPro" id="IPR020605">
    <property type="entry name" value="Octanoyltransferase_CS"/>
</dbReference>
<dbReference type="NCBIfam" id="TIGR00214">
    <property type="entry name" value="lipB"/>
    <property type="match status" value="1"/>
</dbReference>
<dbReference type="PANTHER" id="PTHR10993:SF7">
    <property type="entry name" value="LIPOYLTRANSFERASE 2, MITOCHONDRIAL-RELATED"/>
    <property type="match status" value="1"/>
</dbReference>
<dbReference type="PANTHER" id="PTHR10993">
    <property type="entry name" value="OCTANOYLTRANSFERASE"/>
    <property type="match status" value="1"/>
</dbReference>
<dbReference type="Pfam" id="PF21948">
    <property type="entry name" value="LplA-B_cat"/>
    <property type="match status" value="1"/>
</dbReference>
<dbReference type="PIRSF" id="PIRSF016262">
    <property type="entry name" value="LPLase"/>
    <property type="match status" value="1"/>
</dbReference>
<dbReference type="SUPFAM" id="SSF55681">
    <property type="entry name" value="Class II aaRS and biotin synthetases"/>
    <property type="match status" value="1"/>
</dbReference>
<dbReference type="PROSITE" id="PS51733">
    <property type="entry name" value="BPL_LPL_CATALYTIC"/>
    <property type="match status" value="1"/>
</dbReference>
<dbReference type="PROSITE" id="PS01313">
    <property type="entry name" value="LIPB"/>
    <property type="match status" value="1"/>
</dbReference>
<gene>
    <name evidence="1" type="primary">lipB</name>
    <name type="ordered locus">P9211_03991</name>
</gene>
<evidence type="ECO:0000255" key="1">
    <source>
        <dbReference type="HAMAP-Rule" id="MF_00013"/>
    </source>
</evidence>
<evidence type="ECO:0000255" key="2">
    <source>
        <dbReference type="PROSITE-ProRule" id="PRU01067"/>
    </source>
</evidence>
<proteinExistence type="inferred from homology"/>
<keyword id="KW-0012">Acyltransferase</keyword>
<keyword id="KW-0963">Cytoplasm</keyword>
<keyword id="KW-1185">Reference proteome</keyword>
<keyword id="KW-0808">Transferase</keyword>
<protein>
    <recommendedName>
        <fullName evidence="1">Octanoyltransferase</fullName>
        <ecNumber evidence="1">2.3.1.181</ecNumber>
    </recommendedName>
    <alternativeName>
        <fullName evidence="1">Lipoate-protein ligase B</fullName>
    </alternativeName>
    <alternativeName>
        <fullName evidence="1">Lipoyl/octanoyl transferase</fullName>
    </alternativeName>
    <alternativeName>
        <fullName evidence="1">Octanoyl-[acyl-carrier-protein]-protein N-octanoyltransferase</fullName>
    </alternativeName>
</protein>
<reference key="1">
    <citation type="journal article" date="2007" name="PLoS Genet.">
        <title>Patterns and implications of gene gain and loss in the evolution of Prochlorococcus.</title>
        <authorList>
            <person name="Kettler G.C."/>
            <person name="Martiny A.C."/>
            <person name="Huang K."/>
            <person name="Zucker J."/>
            <person name="Coleman M.L."/>
            <person name="Rodrigue S."/>
            <person name="Chen F."/>
            <person name="Lapidus A."/>
            <person name="Ferriera S."/>
            <person name="Johnson J."/>
            <person name="Steglich C."/>
            <person name="Church G.M."/>
            <person name="Richardson P."/>
            <person name="Chisholm S.W."/>
        </authorList>
    </citation>
    <scope>NUCLEOTIDE SEQUENCE [LARGE SCALE GENOMIC DNA]</scope>
    <source>
        <strain>MIT 9211</strain>
    </source>
</reference>
<feature type="chain" id="PRO_1000089471" description="Octanoyltransferase">
    <location>
        <begin position="1"/>
        <end position="235"/>
    </location>
</feature>
<feature type="domain" description="BPL/LPL catalytic" evidence="2">
    <location>
        <begin position="59"/>
        <end position="235"/>
    </location>
</feature>
<feature type="active site" description="Acyl-thioester intermediate" evidence="1">
    <location>
        <position position="199"/>
    </location>
</feature>
<feature type="binding site" evidence="1">
    <location>
        <begin position="101"/>
        <end position="108"/>
    </location>
    <ligand>
        <name>substrate</name>
    </ligand>
</feature>
<feature type="binding site" evidence="1">
    <location>
        <begin position="168"/>
        <end position="170"/>
    </location>
    <ligand>
        <name>substrate</name>
    </ligand>
</feature>
<feature type="binding site" evidence="1">
    <location>
        <begin position="181"/>
        <end position="183"/>
    </location>
    <ligand>
        <name>substrate</name>
    </ligand>
</feature>
<feature type="site" description="Lowers pKa of active site Cys" evidence="1">
    <location>
        <position position="165"/>
    </location>
</feature>
<organism>
    <name type="scientific">Prochlorococcus marinus (strain MIT 9211)</name>
    <dbReference type="NCBI Taxonomy" id="93059"/>
    <lineage>
        <taxon>Bacteria</taxon>
        <taxon>Bacillati</taxon>
        <taxon>Cyanobacteriota</taxon>
        <taxon>Cyanophyceae</taxon>
        <taxon>Synechococcales</taxon>
        <taxon>Prochlorococcaceae</taxon>
        <taxon>Prochlorococcus</taxon>
    </lineage>
</organism>
<accession>A9BE20</accession>
<name>LIPB_PROM4</name>